<sequence length="581" mass="62639">MDADTINSFFLIGALLIALSVLLSPVSSKLGIPILLVFLAVGMLAGEDGLGGILFDNYSIAYLVSNLALAIILLDGGMRTRVASFRVALWPSVSLATIGVAITTLLTGLMATWLFDLDLLQGILVGAIVGSTDAAAVFSLLKGRSLNERVGSTLEIESGTNDPMAVFLTVTLIAILSSTGTGLSAGFLALSFVKQFGIGALLGFAGGWVLWKVINRNQLPDGLYSILTVSGGLIIFALSNSLGGSGILSIYLVGLLLGNRPTRSRHSILHVLDGMTWLAQIGMFLVLGLLVTPSNLLSIAVPGLALAFGMILFARPISVWIGLLPFKSFTPREKWFVSWVGLRGAVPIILAVFPMMAGLPDAQLYFNLAFFVVMVSLIVQGGTLTKAMSLAKVELPPKPEPISRTGVEIYPTSEWELFIYRLKADKWCIGEPLRSLSMPEGTRIAAVFRNQELLHPSGSTRLEEDDTLCVLAQEKDLAALSLLFSEAPEKASLTRFFGDFFLDIEVKLADVAMMYGLNLGYELQDKTLSNIVEEQLGSTPVLGDQFEWQGLQWVIADVVDHQVTKVGLRLPNEEEEGEEED</sequence>
<reference key="1">
    <citation type="journal article" date="2003" name="Lancet">
        <title>Genome sequence of Vibrio parahaemolyticus: a pathogenic mechanism distinct from that of V. cholerae.</title>
        <authorList>
            <person name="Makino K."/>
            <person name="Oshima K."/>
            <person name="Kurokawa K."/>
            <person name="Yokoyama K."/>
            <person name="Uda T."/>
            <person name="Tagomori K."/>
            <person name="Iijima Y."/>
            <person name="Najima M."/>
            <person name="Nakano M."/>
            <person name="Yamashita A."/>
            <person name="Kubota Y."/>
            <person name="Kimura S."/>
            <person name="Yasunaga T."/>
            <person name="Honda T."/>
            <person name="Shinagawa H."/>
            <person name="Hattori M."/>
            <person name="Iida T."/>
        </authorList>
    </citation>
    <scope>NUCLEOTIDE SEQUENCE [LARGE SCALE GENOMIC DNA]</scope>
    <source>
        <strain>RIMD 2210633</strain>
    </source>
</reference>
<reference key="2">
    <citation type="journal article" date="2006" name="Mol. Microbiol.">
        <title>Cloning, functional expression and primary characterization of Vibrio parahaemolyticus K+/H+ antiporter genes in Escherichia coli.</title>
        <authorList>
            <person name="Radchenko M.V."/>
            <person name="Waditee R."/>
            <person name="Oshimi S."/>
            <person name="Fukuhara M."/>
            <person name="Takabe T."/>
            <person name="Nakamura T."/>
        </authorList>
    </citation>
    <scope>FUNCTION</scope>
    <scope>CATALYTIC ACTIVITY</scope>
    <scope>ACTIVITY REGULATION</scope>
    <scope>BIOPHYSICOCHEMICAL PROPERTIES</scope>
    <scope>SUBCELLULAR LOCATION</scope>
    <source>
        <strain>RIMD 2210633</strain>
    </source>
</reference>
<organism>
    <name type="scientific">Vibrio parahaemolyticus serotype O3:K6 (strain RIMD 2210633)</name>
    <dbReference type="NCBI Taxonomy" id="223926"/>
    <lineage>
        <taxon>Bacteria</taxon>
        <taxon>Pseudomonadati</taxon>
        <taxon>Pseudomonadota</taxon>
        <taxon>Gammaproteobacteria</taxon>
        <taxon>Vibrionales</taxon>
        <taxon>Vibrionaceae</taxon>
        <taxon>Vibrio</taxon>
    </lineage>
</organism>
<comment type="function">
    <text evidence="1 2">K(+)/H(+) antiporter that extrudes potassium in exchange for external protons and maintains the internal concentration of potassium under toxic levels.</text>
</comment>
<comment type="catalytic activity">
    <reaction evidence="1 2">
        <text>K(+)(in) + H(+)(out) = K(+)(out) + H(+)(in)</text>
        <dbReference type="Rhea" id="RHEA:29467"/>
        <dbReference type="ChEBI" id="CHEBI:15378"/>
        <dbReference type="ChEBI" id="CHEBI:29103"/>
    </reaction>
    <physiologicalReaction direction="left-to-right" evidence="1 2">
        <dbReference type="Rhea" id="RHEA:29468"/>
    </physiologicalReaction>
</comment>
<comment type="activity regulation">
    <text evidence="2">May function more efficiently in K(+) concentrations higher than 10 mM.</text>
</comment>
<comment type="biophysicochemical properties">
    <phDependence>
        <text evidence="2">Active at alkaline pH.</text>
    </phDependence>
</comment>
<comment type="subcellular location">
    <subcellularLocation>
        <location evidence="1 2">Cell inner membrane</location>
        <topology evidence="1 2">Multi-pass membrane protein</topology>
    </subcellularLocation>
</comment>
<comment type="similarity">
    <text evidence="1">Belongs to the monovalent cation:proton antiporter 1 (CPA1) transporter (TC 2.A.36) family. NhaP2 subfamily.</text>
</comment>
<accession>Q87KV8</accession>
<name>NHAP2_VIBPA</name>
<feature type="chain" id="PRO_0000052398" description="K(+)/H(+) antiporter NhaP2">
    <location>
        <begin position="1"/>
        <end position="581"/>
    </location>
</feature>
<feature type="transmembrane region" description="Helical" evidence="1">
    <location>
        <begin position="6"/>
        <end position="26"/>
    </location>
</feature>
<feature type="transmembrane region" description="Helical" evidence="1">
    <location>
        <begin position="34"/>
        <end position="54"/>
    </location>
</feature>
<feature type="transmembrane region" description="Helical" evidence="1">
    <location>
        <begin position="58"/>
        <end position="78"/>
    </location>
</feature>
<feature type="transmembrane region" description="Helical" evidence="1">
    <location>
        <begin position="95"/>
        <end position="115"/>
    </location>
</feature>
<feature type="transmembrane region" description="Helical" evidence="1">
    <location>
        <begin position="119"/>
        <end position="139"/>
    </location>
</feature>
<feature type="transmembrane region" description="Helical" evidence="1">
    <location>
        <begin position="163"/>
        <end position="183"/>
    </location>
</feature>
<feature type="transmembrane region" description="Helical" evidence="1">
    <location>
        <begin position="185"/>
        <end position="205"/>
    </location>
</feature>
<feature type="transmembrane region" description="Helical" evidence="1">
    <location>
        <begin position="233"/>
        <end position="253"/>
    </location>
</feature>
<feature type="transmembrane region" description="Helical" evidence="1">
    <location>
        <begin position="281"/>
        <end position="301"/>
    </location>
</feature>
<feature type="transmembrane region" description="Helical" evidence="1">
    <location>
        <begin position="304"/>
        <end position="324"/>
    </location>
</feature>
<feature type="transmembrane region" description="Helical" evidence="1">
    <location>
        <begin position="335"/>
        <end position="355"/>
    </location>
</feature>
<feature type="transmembrane region" description="Helical" evidence="1">
    <location>
        <begin position="364"/>
        <end position="384"/>
    </location>
</feature>
<feature type="domain" description="RCK C-terminal" evidence="1">
    <location>
        <begin position="405"/>
        <end position="486"/>
    </location>
</feature>
<keyword id="KW-0050">Antiport</keyword>
<keyword id="KW-0997">Cell inner membrane</keyword>
<keyword id="KW-1003">Cell membrane</keyword>
<keyword id="KW-0406">Ion transport</keyword>
<keyword id="KW-0472">Membrane</keyword>
<keyword id="KW-0630">Potassium</keyword>
<keyword id="KW-0633">Potassium transport</keyword>
<keyword id="KW-0812">Transmembrane</keyword>
<keyword id="KW-1133">Transmembrane helix</keyword>
<keyword id="KW-0813">Transport</keyword>
<proteinExistence type="evidence at protein level"/>
<dbReference type="EMBL" id="BA000031">
    <property type="protein sequence ID" value="BAC61130.1"/>
    <property type="molecule type" value="Genomic_DNA"/>
</dbReference>
<dbReference type="RefSeq" id="NP_799246.1">
    <property type="nucleotide sequence ID" value="NC_004603.1"/>
</dbReference>
<dbReference type="RefSeq" id="WP_005478599.1">
    <property type="nucleotide sequence ID" value="NC_004603.1"/>
</dbReference>
<dbReference type="SMR" id="Q87KV8"/>
<dbReference type="TCDB" id="2.A.36.6.3">
    <property type="family name" value="the monovalent cation:proton antiporter-1 (cpa1) family"/>
</dbReference>
<dbReference type="GeneID" id="1190430"/>
<dbReference type="KEGG" id="vpa:VP2867"/>
<dbReference type="PATRIC" id="fig|223926.6.peg.2759"/>
<dbReference type="eggNOG" id="COG3263">
    <property type="taxonomic scope" value="Bacteria"/>
</dbReference>
<dbReference type="HOGENOM" id="CLU_005912_9_2_6"/>
<dbReference type="Proteomes" id="UP000002493">
    <property type="component" value="Chromosome 1"/>
</dbReference>
<dbReference type="GO" id="GO:0005886">
    <property type="term" value="C:plasma membrane"/>
    <property type="evidence" value="ECO:0007669"/>
    <property type="project" value="UniProtKB-SubCell"/>
</dbReference>
<dbReference type="GO" id="GO:0050660">
    <property type="term" value="F:flavin adenine dinucleotide binding"/>
    <property type="evidence" value="ECO:0007669"/>
    <property type="project" value="InterPro"/>
</dbReference>
<dbReference type="GO" id="GO:0015386">
    <property type="term" value="F:potassium:proton antiporter activity"/>
    <property type="evidence" value="ECO:0007669"/>
    <property type="project" value="UniProtKB-UniRule"/>
</dbReference>
<dbReference type="GO" id="GO:0006884">
    <property type="term" value="P:cell volume homeostasis"/>
    <property type="evidence" value="ECO:0007669"/>
    <property type="project" value="InterPro"/>
</dbReference>
<dbReference type="Gene3D" id="1.20.1530.20">
    <property type="match status" value="1"/>
</dbReference>
<dbReference type="Gene3D" id="3.30.465.10">
    <property type="match status" value="1"/>
</dbReference>
<dbReference type="Gene3D" id="3.30.70.1450">
    <property type="entry name" value="Regulator of K+ conductance, C-terminal domain"/>
    <property type="match status" value="1"/>
</dbReference>
<dbReference type="HAMAP" id="MF_01075">
    <property type="entry name" value="NhaP2"/>
    <property type="match status" value="1"/>
</dbReference>
<dbReference type="InterPro" id="IPR006153">
    <property type="entry name" value="Cation/H_exchanger_TM"/>
</dbReference>
<dbReference type="InterPro" id="IPR036318">
    <property type="entry name" value="FAD-bd_PCMH-like_sf"/>
</dbReference>
<dbReference type="InterPro" id="IPR016169">
    <property type="entry name" value="FAD-bd_PCMH_sub2"/>
</dbReference>
<dbReference type="InterPro" id="IPR038770">
    <property type="entry name" value="Na+/solute_symporter_sf"/>
</dbReference>
<dbReference type="InterPro" id="IPR023729">
    <property type="entry name" value="NhaP2"/>
</dbReference>
<dbReference type="InterPro" id="IPR006037">
    <property type="entry name" value="RCK_C"/>
</dbReference>
<dbReference type="InterPro" id="IPR036721">
    <property type="entry name" value="RCK_C_sf"/>
</dbReference>
<dbReference type="InterPro" id="IPR005170">
    <property type="entry name" value="Transptr-assoc_dom"/>
</dbReference>
<dbReference type="NCBIfam" id="NF003714">
    <property type="entry name" value="PRK05326.1-1"/>
    <property type="match status" value="1"/>
</dbReference>
<dbReference type="NCBIfam" id="NF003715">
    <property type="entry name" value="PRK05326.1-2"/>
    <property type="match status" value="1"/>
</dbReference>
<dbReference type="NCBIfam" id="NF003716">
    <property type="entry name" value="PRK05326.1-3"/>
    <property type="match status" value="1"/>
</dbReference>
<dbReference type="PANTHER" id="PTHR32507:SF7">
    <property type="entry name" value="K(+)_H(+) ANTIPORTER NHAP2"/>
    <property type="match status" value="1"/>
</dbReference>
<dbReference type="PANTHER" id="PTHR32507">
    <property type="entry name" value="NA(+)/H(+) ANTIPORTER 1"/>
    <property type="match status" value="1"/>
</dbReference>
<dbReference type="Pfam" id="PF03471">
    <property type="entry name" value="CorC_HlyC"/>
    <property type="match status" value="1"/>
</dbReference>
<dbReference type="Pfam" id="PF00999">
    <property type="entry name" value="Na_H_Exchanger"/>
    <property type="match status" value="1"/>
</dbReference>
<dbReference type="Pfam" id="PF02080">
    <property type="entry name" value="TrkA_C"/>
    <property type="match status" value="1"/>
</dbReference>
<dbReference type="SMART" id="SM01091">
    <property type="entry name" value="CorC_HlyC"/>
    <property type="match status" value="1"/>
</dbReference>
<dbReference type="SUPFAM" id="SSF56176">
    <property type="entry name" value="FAD-binding/transporter-associated domain-like"/>
    <property type="match status" value="1"/>
</dbReference>
<dbReference type="SUPFAM" id="SSF116726">
    <property type="entry name" value="TrkA C-terminal domain-like"/>
    <property type="match status" value="1"/>
</dbReference>
<dbReference type="PROSITE" id="PS51202">
    <property type="entry name" value="RCK_C"/>
    <property type="match status" value="1"/>
</dbReference>
<protein>
    <recommendedName>
        <fullName evidence="1">K(+)/H(+) antiporter NhaP2</fullName>
    </recommendedName>
    <alternativeName>
        <fullName evidence="1">Potassium/proton antiporter NhaP2</fullName>
    </alternativeName>
</protein>
<evidence type="ECO:0000255" key="1">
    <source>
        <dbReference type="HAMAP-Rule" id="MF_01075"/>
    </source>
</evidence>
<evidence type="ECO:0000269" key="2">
    <source>
    </source>
</evidence>
<gene>
    <name evidence="1" type="primary">nhaP2</name>
    <name type="synonym">cvrA</name>
    <name type="ordered locus">VP2867</name>
</gene>